<feature type="chain" id="PRO_0000433140" description="Potassium channel toxin alpha-KTx 3.17" evidence="3">
    <location>
        <begin position="1"/>
        <end position="38"/>
    </location>
</feature>
<feature type="disulfide bond" evidence="1">
    <location>
        <begin position="8"/>
        <end position="28"/>
    </location>
</feature>
<feature type="disulfide bond" evidence="1">
    <location>
        <begin position="14"/>
        <end position="33"/>
    </location>
</feature>
<feature type="disulfide bond" evidence="1">
    <location>
        <begin position="18"/>
        <end position="35"/>
    </location>
</feature>
<keyword id="KW-0903">Direct protein sequencing</keyword>
<keyword id="KW-1015">Disulfide bond</keyword>
<keyword id="KW-0872">Ion channel impairing toxin</keyword>
<keyword id="KW-0528">Neurotoxin</keyword>
<keyword id="KW-0632">Potassium channel impairing toxin</keyword>
<keyword id="KW-0964">Secreted</keyword>
<keyword id="KW-0800">Toxin</keyword>
<keyword id="KW-1220">Voltage-gated potassium channel impairing toxin</keyword>
<evidence type="ECO:0000250" key="1"/>
<evidence type="ECO:0000250" key="2">
    <source>
        <dbReference type="UniProtKB" id="P24662"/>
    </source>
</evidence>
<evidence type="ECO:0000269" key="3">
    <source>
    </source>
</evidence>
<evidence type="ECO:0000303" key="4">
    <source>
    </source>
</evidence>
<evidence type="ECO:0000305" key="5"/>
<sequence>GVPINVKCSGSRDCLEPCKKAGMRFGKCINRKCHCTPK</sequence>
<name>KAX3H_BUTPA</name>
<dbReference type="SMR" id="P0DL44"/>
<dbReference type="GO" id="GO:0005576">
    <property type="term" value="C:extracellular region"/>
    <property type="evidence" value="ECO:0007669"/>
    <property type="project" value="UniProtKB-SubCell"/>
</dbReference>
<dbReference type="GO" id="GO:0008200">
    <property type="term" value="F:ion channel inhibitor activity"/>
    <property type="evidence" value="ECO:0007669"/>
    <property type="project" value="InterPro"/>
</dbReference>
<dbReference type="GO" id="GO:0015459">
    <property type="term" value="F:potassium channel regulator activity"/>
    <property type="evidence" value="ECO:0007669"/>
    <property type="project" value="UniProtKB-KW"/>
</dbReference>
<dbReference type="GO" id="GO:0090729">
    <property type="term" value="F:toxin activity"/>
    <property type="evidence" value="ECO:0007669"/>
    <property type="project" value="UniProtKB-KW"/>
</dbReference>
<dbReference type="FunFam" id="3.30.30.10:FF:000009">
    <property type="entry name" value="Potassium channel toxin alpha-KTx 4.3"/>
    <property type="match status" value="1"/>
</dbReference>
<dbReference type="Gene3D" id="3.30.30.10">
    <property type="entry name" value="Knottin, scorpion toxin-like"/>
    <property type="match status" value="1"/>
</dbReference>
<dbReference type="InterPro" id="IPR036574">
    <property type="entry name" value="Scorpion_toxin-like_sf"/>
</dbReference>
<dbReference type="InterPro" id="IPR001947">
    <property type="entry name" value="Scorpion_toxinS_K_inh"/>
</dbReference>
<dbReference type="Pfam" id="PF00451">
    <property type="entry name" value="Toxin_2"/>
    <property type="match status" value="1"/>
</dbReference>
<dbReference type="PRINTS" id="PR00286">
    <property type="entry name" value="CHARYBDTOXIN"/>
</dbReference>
<dbReference type="SUPFAM" id="SSF57095">
    <property type="entry name" value="Scorpion toxin-like"/>
    <property type="match status" value="1"/>
</dbReference>
<dbReference type="PROSITE" id="PS01138">
    <property type="entry name" value="SCORP_SHORT_TOXIN"/>
    <property type="match status" value="1"/>
</dbReference>
<accession>P0DL44</accession>
<reference key="1">
    <citation type="journal article" date="2013" name="Toxicon">
        <title>Characterization of the first K+ channel blockers from the venom of the Moroccan scorpion Buthus occitanus Paris.</title>
        <authorList>
            <person name="Martin-Eauclaire M.F."/>
            <person name="Ceard B."/>
            <person name="Belghazi M."/>
            <person name="Lebrun R."/>
            <person name="Bougis P.E."/>
        </authorList>
    </citation>
    <scope>PROTEIN SEQUENCE</scope>
    <scope>FUNCTION</scope>
    <scope>SUBCELLULAR LOCATION</scope>
    <scope>MASS SPECTROMETRY</scope>
    <scope>TOXIC DOSE</scope>
    <scope>NOMENCLATURE</scope>
    <source>
        <tissue>Venom</tissue>
    </source>
</reference>
<comment type="function">
    <text evidence="3">Completely inhibits the (125)I-kaliotoxin binding on rat brain synaptosomes with high-affinity (IC(50)=0.1 nM). Is a potent Kv1.3/KCNA3 ligand.</text>
</comment>
<comment type="subcellular location">
    <subcellularLocation>
        <location evidence="3">Secreted</location>
    </subcellularLocation>
</comment>
<comment type="tissue specificity">
    <text evidence="5">Expressed by the venom gland.</text>
</comment>
<comment type="domain">
    <text evidence="2">Has the structural arrangement of an alpha-helix connected to a beta-sheet by disulfide bonds (CSalpha/beta).</text>
</comment>
<comment type="mass spectrometry"/>
<comment type="toxic dose">
    <text evidence="3">LD(50) is 10 ug/kg by intracerebroventricular injection into mice.</text>
</comment>
<comment type="similarity">
    <text evidence="5">Belongs to the short scorpion toxin superfamily. Potassium channel inhibitor family. Alpha-KTx 03 subfamily.</text>
</comment>
<organism>
    <name type="scientific">Buthus paris</name>
    <name type="common">Scorpion</name>
    <name type="synonym">Buthus occitanus paris</name>
    <dbReference type="NCBI Taxonomy" id="1388771"/>
    <lineage>
        <taxon>Eukaryota</taxon>
        <taxon>Metazoa</taxon>
        <taxon>Ecdysozoa</taxon>
        <taxon>Arthropoda</taxon>
        <taxon>Chelicerata</taxon>
        <taxon>Arachnida</taxon>
        <taxon>Scorpiones</taxon>
        <taxon>Buthida</taxon>
        <taxon>Buthoidea</taxon>
        <taxon>Buthidae</taxon>
        <taxon>Buthus</taxon>
    </lineage>
</organism>
<proteinExistence type="evidence at protein level"/>
<protein>
    <recommendedName>
        <fullName evidence="4">Potassium channel toxin alpha-KTx 3.17</fullName>
    </recommendedName>
    <alternativeName>
        <fullName evidence="4">Toxin BoPKTX</fullName>
    </alternativeName>
</protein>